<organism>
    <name type="scientific">Crocidura fuliginosa</name>
    <name type="common">Southeast Asian shrew</name>
    <dbReference type="NCBI Taxonomy" id="61090"/>
    <lineage>
        <taxon>Eukaryota</taxon>
        <taxon>Metazoa</taxon>
        <taxon>Chordata</taxon>
        <taxon>Craniata</taxon>
        <taxon>Vertebrata</taxon>
        <taxon>Euteleostomi</taxon>
        <taxon>Mammalia</taxon>
        <taxon>Eutheria</taxon>
        <taxon>Laurasiatheria</taxon>
        <taxon>Eulipotyphla</taxon>
        <taxon>Soricidae</taxon>
        <taxon>Crocidurinae</taxon>
        <taxon>Crocidura</taxon>
    </lineage>
</organism>
<proteinExistence type="inferred from homology"/>
<evidence type="ECO:0000250" key="1"/>
<evidence type="ECO:0000250" key="2">
    <source>
        <dbReference type="UniProtKB" id="P00157"/>
    </source>
</evidence>
<evidence type="ECO:0000255" key="3">
    <source>
        <dbReference type="PROSITE-ProRule" id="PRU00967"/>
    </source>
</evidence>
<evidence type="ECO:0000255" key="4">
    <source>
        <dbReference type="PROSITE-ProRule" id="PRU00968"/>
    </source>
</evidence>
<geneLocation type="mitochondrion"/>
<dbReference type="EMBL" id="AB175079">
    <property type="protein sequence ID" value="BAE92644.1"/>
    <property type="molecule type" value="Genomic_DNA"/>
</dbReference>
<dbReference type="SMR" id="Q1XIQ2"/>
<dbReference type="GO" id="GO:0005743">
    <property type="term" value="C:mitochondrial inner membrane"/>
    <property type="evidence" value="ECO:0007669"/>
    <property type="project" value="UniProtKB-SubCell"/>
</dbReference>
<dbReference type="GO" id="GO:0045275">
    <property type="term" value="C:respiratory chain complex III"/>
    <property type="evidence" value="ECO:0007669"/>
    <property type="project" value="InterPro"/>
</dbReference>
<dbReference type="GO" id="GO:0046872">
    <property type="term" value="F:metal ion binding"/>
    <property type="evidence" value="ECO:0007669"/>
    <property type="project" value="UniProtKB-KW"/>
</dbReference>
<dbReference type="GO" id="GO:0008121">
    <property type="term" value="F:ubiquinol-cytochrome-c reductase activity"/>
    <property type="evidence" value="ECO:0007669"/>
    <property type="project" value="InterPro"/>
</dbReference>
<dbReference type="GO" id="GO:0006122">
    <property type="term" value="P:mitochondrial electron transport, ubiquinol to cytochrome c"/>
    <property type="evidence" value="ECO:0007669"/>
    <property type="project" value="TreeGrafter"/>
</dbReference>
<dbReference type="CDD" id="cd00290">
    <property type="entry name" value="cytochrome_b_C"/>
    <property type="match status" value="1"/>
</dbReference>
<dbReference type="CDD" id="cd00284">
    <property type="entry name" value="Cytochrome_b_N"/>
    <property type="match status" value="1"/>
</dbReference>
<dbReference type="FunFam" id="1.20.810.10:FF:000002">
    <property type="entry name" value="Cytochrome b"/>
    <property type="match status" value="1"/>
</dbReference>
<dbReference type="Gene3D" id="1.20.810.10">
    <property type="entry name" value="Cytochrome Bc1 Complex, Chain C"/>
    <property type="match status" value="1"/>
</dbReference>
<dbReference type="InterPro" id="IPR005798">
    <property type="entry name" value="Cyt_b/b6_C"/>
</dbReference>
<dbReference type="InterPro" id="IPR036150">
    <property type="entry name" value="Cyt_b/b6_C_sf"/>
</dbReference>
<dbReference type="InterPro" id="IPR005797">
    <property type="entry name" value="Cyt_b/b6_N"/>
</dbReference>
<dbReference type="InterPro" id="IPR027387">
    <property type="entry name" value="Cytb/b6-like_sf"/>
</dbReference>
<dbReference type="InterPro" id="IPR030689">
    <property type="entry name" value="Cytochrome_b"/>
</dbReference>
<dbReference type="InterPro" id="IPR048260">
    <property type="entry name" value="Cytochrome_b_C_euk/bac"/>
</dbReference>
<dbReference type="InterPro" id="IPR048259">
    <property type="entry name" value="Cytochrome_b_N_euk/bac"/>
</dbReference>
<dbReference type="InterPro" id="IPR016174">
    <property type="entry name" value="Di-haem_cyt_TM"/>
</dbReference>
<dbReference type="PANTHER" id="PTHR19271">
    <property type="entry name" value="CYTOCHROME B"/>
    <property type="match status" value="1"/>
</dbReference>
<dbReference type="PANTHER" id="PTHR19271:SF16">
    <property type="entry name" value="CYTOCHROME B"/>
    <property type="match status" value="1"/>
</dbReference>
<dbReference type="Pfam" id="PF00032">
    <property type="entry name" value="Cytochrom_B_C"/>
    <property type="match status" value="1"/>
</dbReference>
<dbReference type="Pfam" id="PF00033">
    <property type="entry name" value="Cytochrome_B"/>
    <property type="match status" value="1"/>
</dbReference>
<dbReference type="PIRSF" id="PIRSF038885">
    <property type="entry name" value="COB"/>
    <property type="match status" value="1"/>
</dbReference>
<dbReference type="SUPFAM" id="SSF81648">
    <property type="entry name" value="a domain/subunit of cytochrome bc1 complex (Ubiquinol-cytochrome c reductase)"/>
    <property type="match status" value="1"/>
</dbReference>
<dbReference type="SUPFAM" id="SSF81342">
    <property type="entry name" value="Transmembrane di-heme cytochromes"/>
    <property type="match status" value="1"/>
</dbReference>
<dbReference type="PROSITE" id="PS51003">
    <property type="entry name" value="CYTB_CTER"/>
    <property type="match status" value="1"/>
</dbReference>
<dbReference type="PROSITE" id="PS51002">
    <property type="entry name" value="CYTB_NTER"/>
    <property type="match status" value="1"/>
</dbReference>
<accession>Q1XIQ2</accession>
<feature type="chain" id="PRO_0000254793" description="Cytochrome b">
    <location>
        <begin position="1"/>
        <end position="379"/>
    </location>
</feature>
<feature type="transmembrane region" description="Helical" evidence="2">
    <location>
        <begin position="33"/>
        <end position="53"/>
    </location>
</feature>
<feature type="transmembrane region" description="Helical" evidence="2">
    <location>
        <begin position="77"/>
        <end position="98"/>
    </location>
</feature>
<feature type="transmembrane region" description="Helical" evidence="2">
    <location>
        <begin position="113"/>
        <end position="133"/>
    </location>
</feature>
<feature type="transmembrane region" description="Helical" evidence="2">
    <location>
        <begin position="178"/>
        <end position="198"/>
    </location>
</feature>
<feature type="transmembrane region" description="Helical" evidence="2">
    <location>
        <begin position="226"/>
        <end position="246"/>
    </location>
</feature>
<feature type="transmembrane region" description="Helical" evidence="2">
    <location>
        <begin position="288"/>
        <end position="308"/>
    </location>
</feature>
<feature type="transmembrane region" description="Helical" evidence="2">
    <location>
        <begin position="320"/>
        <end position="340"/>
    </location>
</feature>
<feature type="transmembrane region" description="Helical" evidence="2">
    <location>
        <begin position="347"/>
        <end position="367"/>
    </location>
</feature>
<feature type="binding site" description="axial binding residue" evidence="2">
    <location>
        <position position="83"/>
    </location>
    <ligand>
        <name>heme b</name>
        <dbReference type="ChEBI" id="CHEBI:60344"/>
        <label>b562</label>
    </ligand>
    <ligandPart>
        <name>Fe</name>
        <dbReference type="ChEBI" id="CHEBI:18248"/>
    </ligandPart>
</feature>
<feature type="binding site" description="axial binding residue" evidence="2">
    <location>
        <position position="97"/>
    </location>
    <ligand>
        <name>heme b</name>
        <dbReference type="ChEBI" id="CHEBI:60344"/>
        <label>b566</label>
    </ligand>
    <ligandPart>
        <name>Fe</name>
        <dbReference type="ChEBI" id="CHEBI:18248"/>
    </ligandPart>
</feature>
<feature type="binding site" description="axial binding residue" evidence="2">
    <location>
        <position position="182"/>
    </location>
    <ligand>
        <name>heme b</name>
        <dbReference type="ChEBI" id="CHEBI:60344"/>
        <label>b562</label>
    </ligand>
    <ligandPart>
        <name>Fe</name>
        <dbReference type="ChEBI" id="CHEBI:18248"/>
    </ligandPart>
</feature>
<feature type="binding site" description="axial binding residue" evidence="2">
    <location>
        <position position="196"/>
    </location>
    <ligand>
        <name>heme b</name>
        <dbReference type="ChEBI" id="CHEBI:60344"/>
        <label>b566</label>
    </ligand>
    <ligandPart>
        <name>Fe</name>
        <dbReference type="ChEBI" id="CHEBI:18248"/>
    </ligandPart>
</feature>
<feature type="binding site" evidence="2">
    <location>
        <position position="201"/>
    </location>
    <ligand>
        <name>a ubiquinone</name>
        <dbReference type="ChEBI" id="CHEBI:16389"/>
    </ligand>
</feature>
<name>CYB_CROFU</name>
<sequence>MNNIRKTHPLMKIVNSSFIDLPAPSNISSWWNFGSLLGICLIAQILTGLFLAMHYTSDTMTAFSSVTHICRDVNYGWLIRYLHANGASMFFICLFLHVGRGLYYGSYMFLETWNIGVLLLFAVMATAFMGYVLPWGQMSFWGATVITNLLSAIPYIGTNLVEWIWGGFSVDKATLTRFFAFHFILPFIVAALAGVHLLFLHETGSNNPSGLNSDTDKIPFHPYYTIKDILGALIMITALSSLVLFSPDMLGDPDNYIPANPLNTPPHIKPEWYFLFAYAILRSIPNKLGGVLALVLSIAILMIIPLLHTAKQRSMMFRPMSQCMFWILVADLFTLTWIGGQPVEHPFVVIGQLASMIYFMLILLIMPITSMIENQLLKW</sequence>
<comment type="function">
    <text evidence="2">Component of the ubiquinol-cytochrome c reductase complex (complex III or cytochrome b-c1 complex) that is part of the mitochondrial respiratory chain. The b-c1 complex mediates electron transfer from ubiquinol to cytochrome c. Contributes to the generation of a proton gradient across the mitochondrial membrane that is then used for ATP synthesis.</text>
</comment>
<comment type="cofactor">
    <cofactor evidence="2">
        <name>heme b</name>
        <dbReference type="ChEBI" id="CHEBI:60344"/>
    </cofactor>
    <text evidence="2">Binds 2 heme b groups non-covalently.</text>
</comment>
<comment type="subunit">
    <text evidence="2">The cytochrome bc1 complex contains 11 subunits: 3 respiratory subunits (MT-CYB, CYC1 and UQCRFS1), 2 core proteins (UQCRC1 and UQCRC2) and 6 low-molecular weight proteins (UQCRH/QCR6, UQCRB/QCR7, UQCRQ/QCR8, UQCR10/QCR9, UQCR11/QCR10 and a cleavage product of UQCRFS1). This cytochrome bc1 complex then forms a dimer.</text>
</comment>
<comment type="subcellular location">
    <subcellularLocation>
        <location evidence="2">Mitochondrion inner membrane</location>
        <topology evidence="2">Multi-pass membrane protein</topology>
    </subcellularLocation>
</comment>
<comment type="miscellaneous">
    <text evidence="1">Heme 1 (or BL or b562) is low-potential and absorbs at about 562 nm, and heme 2 (or BH or b566) is high-potential and absorbs at about 566 nm.</text>
</comment>
<comment type="similarity">
    <text evidence="3 4">Belongs to the cytochrome b family.</text>
</comment>
<comment type="caution">
    <text evidence="2">The full-length protein contains only eight transmembrane helices, not nine as predicted by bioinformatics tools.</text>
</comment>
<keyword id="KW-0249">Electron transport</keyword>
<keyword id="KW-0349">Heme</keyword>
<keyword id="KW-0408">Iron</keyword>
<keyword id="KW-0472">Membrane</keyword>
<keyword id="KW-0479">Metal-binding</keyword>
<keyword id="KW-0496">Mitochondrion</keyword>
<keyword id="KW-0999">Mitochondrion inner membrane</keyword>
<keyword id="KW-0679">Respiratory chain</keyword>
<keyword id="KW-0812">Transmembrane</keyword>
<keyword id="KW-1133">Transmembrane helix</keyword>
<keyword id="KW-0813">Transport</keyword>
<keyword id="KW-0830">Ubiquinone</keyword>
<reference key="1">
    <citation type="submission" date="2004-03" db="EMBL/GenBank/DDBJ databases">
        <title>Molecular phylogenetics of the Soricidae (Insectivora, Mammalia) based on mitochondrial cytochrome b gene sequences.</title>
        <authorList>
            <person name="Ohdachi S.D."/>
            <person name="Iwasa M.A."/>
            <person name="Abe H."/>
            <person name="Vogel P."/>
            <person name="Oshida T."/>
            <person name="Lin L.K."/>
            <person name="Hasegawa M."/>
        </authorList>
    </citation>
    <scope>NUCLEOTIDE SEQUENCE [GENOMIC DNA]</scope>
</reference>
<gene>
    <name type="primary">MT-CYB</name>
    <name type="synonym">COB</name>
    <name type="synonym">CYTB</name>
    <name type="synonym">MTCYB</name>
</gene>
<protein>
    <recommendedName>
        <fullName>Cytochrome b</fullName>
    </recommendedName>
    <alternativeName>
        <fullName>Complex III subunit 3</fullName>
    </alternativeName>
    <alternativeName>
        <fullName>Complex III subunit III</fullName>
    </alternativeName>
    <alternativeName>
        <fullName>Cytochrome b-c1 complex subunit 3</fullName>
    </alternativeName>
    <alternativeName>
        <fullName>Ubiquinol-cytochrome-c reductase complex cytochrome b subunit</fullName>
    </alternativeName>
</protein>